<name>RLMF_PHOPR</name>
<comment type="function">
    <text evidence="1">Specifically methylates the adenine in position 1618 of 23S rRNA.</text>
</comment>
<comment type="catalytic activity">
    <reaction evidence="1">
        <text>adenosine(1618) in 23S rRNA + S-adenosyl-L-methionine = N(6)-methyladenosine(1618) in 23S rRNA + S-adenosyl-L-homocysteine + H(+)</text>
        <dbReference type="Rhea" id="RHEA:16497"/>
        <dbReference type="Rhea" id="RHEA-COMP:10229"/>
        <dbReference type="Rhea" id="RHEA-COMP:10231"/>
        <dbReference type="ChEBI" id="CHEBI:15378"/>
        <dbReference type="ChEBI" id="CHEBI:57856"/>
        <dbReference type="ChEBI" id="CHEBI:59789"/>
        <dbReference type="ChEBI" id="CHEBI:74411"/>
        <dbReference type="ChEBI" id="CHEBI:74449"/>
        <dbReference type="EC" id="2.1.1.181"/>
    </reaction>
</comment>
<comment type="subcellular location">
    <subcellularLocation>
        <location evidence="1">Cytoplasm</location>
    </subcellularLocation>
</comment>
<comment type="similarity">
    <text evidence="1">Belongs to the methyltransferase superfamily. METTL16/RlmF family.</text>
</comment>
<protein>
    <recommendedName>
        <fullName evidence="1">Ribosomal RNA large subunit methyltransferase F</fullName>
        <ecNumber evidence="1">2.1.1.181</ecNumber>
    </recommendedName>
    <alternativeName>
        <fullName evidence="1">23S rRNA mA1618 methyltransferase</fullName>
    </alternativeName>
    <alternativeName>
        <fullName evidence="1">rRNA adenine N-6-methyltransferase</fullName>
    </alternativeName>
</protein>
<feature type="chain" id="PRO_0000349922" description="Ribosomal RNA large subunit methyltransferase F">
    <location>
        <begin position="1"/>
        <end position="338"/>
    </location>
</feature>
<feature type="region of interest" description="Disordered" evidence="2">
    <location>
        <begin position="1"/>
        <end position="21"/>
    </location>
</feature>
<organism>
    <name type="scientific">Photobacterium profundum (strain SS9)</name>
    <dbReference type="NCBI Taxonomy" id="298386"/>
    <lineage>
        <taxon>Bacteria</taxon>
        <taxon>Pseudomonadati</taxon>
        <taxon>Pseudomonadota</taxon>
        <taxon>Gammaproteobacteria</taxon>
        <taxon>Vibrionales</taxon>
        <taxon>Vibrionaceae</taxon>
        <taxon>Photobacterium</taxon>
    </lineage>
</organism>
<accession>Q6LIW6</accession>
<sequence>MTQKKNKPTQKKKGLHPRNPHSQRYDFNALILSCPDLTPFVAENQFGDLSVDFSDPAAVKMLNKALLHHFYNVENWDIPPGYLCPPIPGRADYIHHIADLLAKSNEGVIPQGKHINGLDIGMGANCVYPIIGHRAYGWRFVGSDVDALSIKSAKFIVESNRSLAGGIKCRLQKKSDNIFTGIINANDIFDFTMCNPPFHASLEEATAGSERKVRNLSANAHKKGSNKKAELFAKSNTNKPVLNFGGQKAELWCPGGEDAFIQRMITESSDKPENCFWYSTLVSKKENLPALYKALKQVNAVDVRTIDMAQGQKVTRIVAWTFLSKGQQTQWREERWSA</sequence>
<evidence type="ECO:0000255" key="1">
    <source>
        <dbReference type="HAMAP-Rule" id="MF_01848"/>
    </source>
</evidence>
<evidence type="ECO:0000256" key="2">
    <source>
        <dbReference type="SAM" id="MobiDB-lite"/>
    </source>
</evidence>
<keyword id="KW-0963">Cytoplasm</keyword>
<keyword id="KW-0489">Methyltransferase</keyword>
<keyword id="KW-1185">Reference proteome</keyword>
<keyword id="KW-0698">rRNA processing</keyword>
<keyword id="KW-0949">S-adenosyl-L-methionine</keyword>
<keyword id="KW-0808">Transferase</keyword>
<dbReference type="EC" id="2.1.1.181" evidence="1"/>
<dbReference type="EMBL" id="CR378677">
    <property type="protein sequence ID" value="CAG22764.1"/>
    <property type="molecule type" value="Genomic_DNA"/>
</dbReference>
<dbReference type="RefSeq" id="WP_011220965.1">
    <property type="nucleotide sequence ID" value="NC_006371.1"/>
</dbReference>
<dbReference type="SMR" id="Q6LIW6"/>
<dbReference type="STRING" id="298386.PBPRB0892"/>
<dbReference type="KEGG" id="ppr:PBPRB0892"/>
<dbReference type="eggNOG" id="COG3129">
    <property type="taxonomic scope" value="Bacteria"/>
</dbReference>
<dbReference type="HOGENOM" id="CLU_027534_3_0_6"/>
<dbReference type="Proteomes" id="UP000000593">
    <property type="component" value="Chromosome 2"/>
</dbReference>
<dbReference type="GO" id="GO:0005737">
    <property type="term" value="C:cytoplasm"/>
    <property type="evidence" value="ECO:0007669"/>
    <property type="project" value="UniProtKB-SubCell"/>
</dbReference>
<dbReference type="GO" id="GO:0052907">
    <property type="term" value="F:23S rRNA (adenine(1618)-N(6))-methyltransferase activity"/>
    <property type="evidence" value="ECO:0007669"/>
    <property type="project" value="UniProtKB-EC"/>
</dbReference>
<dbReference type="GO" id="GO:0070475">
    <property type="term" value="P:rRNA base methylation"/>
    <property type="evidence" value="ECO:0007669"/>
    <property type="project" value="TreeGrafter"/>
</dbReference>
<dbReference type="Gene3D" id="3.40.50.150">
    <property type="entry name" value="Vaccinia Virus protein VP39"/>
    <property type="match status" value="1"/>
</dbReference>
<dbReference type="HAMAP" id="MF_01848">
    <property type="entry name" value="23SrRNA_methyltr_F"/>
    <property type="match status" value="1"/>
</dbReference>
<dbReference type="InterPro" id="IPR010286">
    <property type="entry name" value="METTL16/RlmF"/>
</dbReference>
<dbReference type="InterPro" id="IPR016909">
    <property type="entry name" value="rRNA_lsu_MeTfrase_F"/>
</dbReference>
<dbReference type="InterPro" id="IPR029063">
    <property type="entry name" value="SAM-dependent_MTases_sf"/>
</dbReference>
<dbReference type="NCBIfam" id="NF008725">
    <property type="entry name" value="PRK11727.1"/>
    <property type="match status" value="1"/>
</dbReference>
<dbReference type="PANTHER" id="PTHR13393:SF0">
    <property type="entry name" value="RNA N6-ADENOSINE-METHYLTRANSFERASE METTL16"/>
    <property type="match status" value="1"/>
</dbReference>
<dbReference type="PANTHER" id="PTHR13393">
    <property type="entry name" value="SAM-DEPENDENT METHYLTRANSFERASE"/>
    <property type="match status" value="1"/>
</dbReference>
<dbReference type="Pfam" id="PF05971">
    <property type="entry name" value="Methyltransf_10"/>
    <property type="match status" value="1"/>
</dbReference>
<dbReference type="PIRSF" id="PIRSF029038">
    <property type="entry name" value="Mtase_YbiN_prd"/>
    <property type="match status" value="1"/>
</dbReference>
<dbReference type="SUPFAM" id="SSF53335">
    <property type="entry name" value="S-adenosyl-L-methionine-dependent methyltransferases"/>
    <property type="match status" value="1"/>
</dbReference>
<reference key="1">
    <citation type="journal article" date="2005" name="Science">
        <title>Life at depth: Photobacterium profundum genome sequence and expression analysis.</title>
        <authorList>
            <person name="Vezzi A."/>
            <person name="Campanaro S."/>
            <person name="D'Angelo M."/>
            <person name="Simonato F."/>
            <person name="Vitulo N."/>
            <person name="Lauro F.M."/>
            <person name="Cestaro A."/>
            <person name="Malacrida G."/>
            <person name="Simionati B."/>
            <person name="Cannata N."/>
            <person name="Romualdi C."/>
            <person name="Bartlett D.H."/>
            <person name="Valle G."/>
        </authorList>
    </citation>
    <scope>NUCLEOTIDE SEQUENCE [LARGE SCALE GENOMIC DNA]</scope>
    <source>
        <strain>ATCC BAA-1253 / SS9</strain>
    </source>
</reference>
<proteinExistence type="inferred from homology"/>
<gene>
    <name evidence="1" type="primary">rlmF</name>
    <name type="ordered locus">PBPRB0892</name>
</gene>